<organism>
    <name type="scientific">Halalkalibacterium halodurans (strain ATCC BAA-125 / DSM 18197 / FERM 7344 / JCM 9153 / C-125)</name>
    <name type="common">Bacillus halodurans</name>
    <dbReference type="NCBI Taxonomy" id="272558"/>
    <lineage>
        <taxon>Bacteria</taxon>
        <taxon>Bacillati</taxon>
        <taxon>Bacillota</taxon>
        <taxon>Bacilli</taxon>
        <taxon>Bacillales</taxon>
        <taxon>Bacillaceae</taxon>
        <taxon>Halalkalibacterium (ex Joshi et al. 2022)</taxon>
    </lineage>
</organism>
<protein>
    <recommendedName>
        <fullName evidence="1">3-dehydroquinate dehydratase</fullName>
        <shortName evidence="1">3-dehydroquinase</shortName>
        <ecNumber evidence="1">4.2.1.10</ecNumber>
    </recommendedName>
    <alternativeName>
        <fullName evidence="1">Type II DHQase</fullName>
    </alternativeName>
</protein>
<reference key="1">
    <citation type="journal article" date="2000" name="Nucleic Acids Res.">
        <title>Complete genome sequence of the alkaliphilic bacterium Bacillus halodurans and genomic sequence comparison with Bacillus subtilis.</title>
        <authorList>
            <person name="Takami H."/>
            <person name="Nakasone K."/>
            <person name="Takaki Y."/>
            <person name="Maeno G."/>
            <person name="Sasaki R."/>
            <person name="Masui N."/>
            <person name="Fuji F."/>
            <person name="Hirama C."/>
            <person name="Nakamura Y."/>
            <person name="Ogasawara N."/>
            <person name="Kuhara S."/>
            <person name="Horikoshi K."/>
        </authorList>
    </citation>
    <scope>NUCLEOTIDE SEQUENCE [LARGE SCALE GENOMIC DNA]</scope>
    <source>
        <strain>ATCC BAA-125 / DSM 18197 / FERM 7344 / JCM 9153 / C-125</strain>
    </source>
</reference>
<feature type="chain" id="PRO_0000159870" description="3-dehydroquinate dehydratase">
    <location>
        <begin position="1"/>
        <end position="145"/>
    </location>
</feature>
<feature type="active site" description="Proton acceptor" evidence="1">
    <location>
        <position position="23"/>
    </location>
</feature>
<feature type="active site" description="Proton donor" evidence="1">
    <location>
        <position position="100"/>
    </location>
</feature>
<feature type="binding site" evidence="1">
    <location>
        <position position="74"/>
    </location>
    <ligand>
        <name>substrate</name>
    </ligand>
</feature>
<feature type="binding site" evidence="1">
    <location>
        <position position="80"/>
    </location>
    <ligand>
        <name>substrate</name>
    </ligand>
</feature>
<feature type="binding site" evidence="1">
    <location>
        <position position="87"/>
    </location>
    <ligand>
        <name>substrate</name>
    </ligand>
</feature>
<feature type="binding site" evidence="1">
    <location>
        <begin position="101"/>
        <end position="102"/>
    </location>
    <ligand>
        <name>substrate</name>
    </ligand>
</feature>
<feature type="binding site" evidence="1">
    <location>
        <position position="111"/>
    </location>
    <ligand>
        <name>substrate</name>
    </ligand>
</feature>
<feature type="site" description="Transition state stabilizer" evidence="1">
    <location>
        <position position="18"/>
    </location>
</feature>
<accession>Q9K949</accession>
<comment type="function">
    <text evidence="1">Catalyzes a trans-dehydration via an enolate intermediate.</text>
</comment>
<comment type="catalytic activity">
    <reaction evidence="1">
        <text>3-dehydroquinate = 3-dehydroshikimate + H2O</text>
        <dbReference type="Rhea" id="RHEA:21096"/>
        <dbReference type="ChEBI" id="CHEBI:15377"/>
        <dbReference type="ChEBI" id="CHEBI:16630"/>
        <dbReference type="ChEBI" id="CHEBI:32364"/>
        <dbReference type="EC" id="4.2.1.10"/>
    </reaction>
</comment>
<comment type="pathway">
    <text evidence="1">Metabolic intermediate biosynthesis; chorismate biosynthesis; chorismate from D-erythrose 4-phosphate and phosphoenolpyruvate: step 3/7.</text>
</comment>
<comment type="subunit">
    <text evidence="1">Homododecamer.</text>
</comment>
<comment type="similarity">
    <text evidence="1">Belongs to the type-II 3-dehydroquinase family.</text>
</comment>
<sequence length="145" mass="16050">METIMVINGPNLNRLGKREPDIYGRETLSDLHERLIKFAEARGYKADCRQSNHEGDIIDWIHEAEGRSSGVILNPGAFTHYSYAIRDAIASISVPVIEVHLSNVHARESFRHTSVTAPVTKGQIVGLGVIGYELAMLALLEGEKK</sequence>
<gene>
    <name evidence="1" type="primary">aroQ</name>
    <name type="ordered locus">BH2801</name>
</gene>
<dbReference type="EC" id="4.2.1.10" evidence="1"/>
<dbReference type="EMBL" id="BA000004">
    <property type="protein sequence ID" value="BAB06520.1"/>
    <property type="molecule type" value="Genomic_DNA"/>
</dbReference>
<dbReference type="PIR" id="A84000">
    <property type="entry name" value="A84000"/>
</dbReference>
<dbReference type="RefSeq" id="WP_010898949.1">
    <property type="nucleotide sequence ID" value="NC_002570.2"/>
</dbReference>
<dbReference type="SMR" id="Q9K949"/>
<dbReference type="STRING" id="272558.gene:10728701"/>
<dbReference type="KEGG" id="bha:BH2801"/>
<dbReference type="eggNOG" id="COG0757">
    <property type="taxonomic scope" value="Bacteria"/>
</dbReference>
<dbReference type="HOGENOM" id="CLU_090968_3_0_9"/>
<dbReference type="OrthoDB" id="9790793at2"/>
<dbReference type="UniPathway" id="UPA00053">
    <property type="reaction ID" value="UER00086"/>
</dbReference>
<dbReference type="Proteomes" id="UP000001258">
    <property type="component" value="Chromosome"/>
</dbReference>
<dbReference type="GO" id="GO:0003855">
    <property type="term" value="F:3-dehydroquinate dehydratase activity"/>
    <property type="evidence" value="ECO:0007669"/>
    <property type="project" value="UniProtKB-UniRule"/>
</dbReference>
<dbReference type="GO" id="GO:0008652">
    <property type="term" value="P:amino acid biosynthetic process"/>
    <property type="evidence" value="ECO:0007669"/>
    <property type="project" value="UniProtKB-KW"/>
</dbReference>
<dbReference type="GO" id="GO:0009073">
    <property type="term" value="P:aromatic amino acid family biosynthetic process"/>
    <property type="evidence" value="ECO:0007669"/>
    <property type="project" value="UniProtKB-KW"/>
</dbReference>
<dbReference type="GO" id="GO:0009423">
    <property type="term" value="P:chorismate biosynthetic process"/>
    <property type="evidence" value="ECO:0007669"/>
    <property type="project" value="UniProtKB-UniRule"/>
</dbReference>
<dbReference type="GO" id="GO:0019631">
    <property type="term" value="P:quinate catabolic process"/>
    <property type="evidence" value="ECO:0007669"/>
    <property type="project" value="TreeGrafter"/>
</dbReference>
<dbReference type="CDD" id="cd00466">
    <property type="entry name" value="DHQase_II"/>
    <property type="match status" value="1"/>
</dbReference>
<dbReference type="Gene3D" id="3.40.50.9100">
    <property type="entry name" value="Dehydroquinase, class II"/>
    <property type="match status" value="1"/>
</dbReference>
<dbReference type="HAMAP" id="MF_00169">
    <property type="entry name" value="AroQ"/>
    <property type="match status" value="1"/>
</dbReference>
<dbReference type="InterPro" id="IPR001874">
    <property type="entry name" value="DHquinase_II"/>
</dbReference>
<dbReference type="InterPro" id="IPR018509">
    <property type="entry name" value="DHquinase_II_CS"/>
</dbReference>
<dbReference type="InterPro" id="IPR036441">
    <property type="entry name" value="DHquinase_II_sf"/>
</dbReference>
<dbReference type="NCBIfam" id="TIGR01088">
    <property type="entry name" value="aroQ"/>
    <property type="match status" value="1"/>
</dbReference>
<dbReference type="NCBIfam" id="NF003805">
    <property type="entry name" value="PRK05395.1-2"/>
    <property type="match status" value="1"/>
</dbReference>
<dbReference type="NCBIfam" id="NF003806">
    <property type="entry name" value="PRK05395.1-3"/>
    <property type="match status" value="1"/>
</dbReference>
<dbReference type="NCBIfam" id="NF003807">
    <property type="entry name" value="PRK05395.1-4"/>
    <property type="match status" value="1"/>
</dbReference>
<dbReference type="PANTHER" id="PTHR21272">
    <property type="entry name" value="CATABOLIC 3-DEHYDROQUINASE"/>
    <property type="match status" value="1"/>
</dbReference>
<dbReference type="PANTHER" id="PTHR21272:SF3">
    <property type="entry name" value="CATABOLIC 3-DEHYDROQUINASE"/>
    <property type="match status" value="1"/>
</dbReference>
<dbReference type="Pfam" id="PF01220">
    <property type="entry name" value="DHquinase_II"/>
    <property type="match status" value="1"/>
</dbReference>
<dbReference type="PIRSF" id="PIRSF001399">
    <property type="entry name" value="DHquinase_II"/>
    <property type="match status" value="1"/>
</dbReference>
<dbReference type="SUPFAM" id="SSF52304">
    <property type="entry name" value="Type II 3-dehydroquinate dehydratase"/>
    <property type="match status" value="1"/>
</dbReference>
<dbReference type="PROSITE" id="PS01029">
    <property type="entry name" value="DEHYDROQUINASE_II"/>
    <property type="match status" value="1"/>
</dbReference>
<name>AROQ_HALH5</name>
<evidence type="ECO:0000255" key="1">
    <source>
        <dbReference type="HAMAP-Rule" id="MF_00169"/>
    </source>
</evidence>
<proteinExistence type="inferred from homology"/>
<keyword id="KW-0028">Amino-acid biosynthesis</keyword>
<keyword id="KW-0057">Aromatic amino acid biosynthesis</keyword>
<keyword id="KW-0456">Lyase</keyword>
<keyword id="KW-1185">Reference proteome</keyword>